<evidence type="ECO:0000255" key="1">
    <source>
        <dbReference type="HAMAP-Rule" id="MF_00523"/>
    </source>
</evidence>
<organism>
    <name type="scientific">Bordetella parapertussis (strain 12822 / ATCC BAA-587 / NCTC 13253)</name>
    <dbReference type="NCBI Taxonomy" id="257311"/>
    <lineage>
        <taxon>Bacteria</taxon>
        <taxon>Pseudomonadati</taxon>
        <taxon>Pseudomonadota</taxon>
        <taxon>Betaproteobacteria</taxon>
        <taxon>Burkholderiales</taxon>
        <taxon>Alcaligenaceae</taxon>
        <taxon>Bordetella</taxon>
    </lineage>
</organism>
<comment type="function">
    <text evidence="1">Catalyzes the N-acylation of UDP-3-O-acylglucosamine using 3-hydroxyacyl-ACP as the acyl donor. Is involved in the biosynthesis of lipid A, a phosphorylated glycolipid that anchors the lipopolysaccharide to the outer membrane of the cell.</text>
</comment>
<comment type="catalytic activity">
    <reaction evidence="1">
        <text>a UDP-3-O-[(3R)-3-hydroxyacyl]-alpha-D-glucosamine + a (3R)-hydroxyacyl-[ACP] = a UDP-2-N,3-O-bis[(3R)-3-hydroxyacyl]-alpha-D-glucosamine + holo-[ACP] + H(+)</text>
        <dbReference type="Rhea" id="RHEA:53836"/>
        <dbReference type="Rhea" id="RHEA-COMP:9685"/>
        <dbReference type="Rhea" id="RHEA-COMP:9945"/>
        <dbReference type="ChEBI" id="CHEBI:15378"/>
        <dbReference type="ChEBI" id="CHEBI:64479"/>
        <dbReference type="ChEBI" id="CHEBI:78827"/>
        <dbReference type="ChEBI" id="CHEBI:137740"/>
        <dbReference type="ChEBI" id="CHEBI:137748"/>
        <dbReference type="EC" id="2.3.1.191"/>
    </reaction>
</comment>
<comment type="pathway">
    <text evidence="1">Bacterial outer membrane biogenesis; LPS lipid A biosynthesis.</text>
</comment>
<comment type="subunit">
    <text evidence="1">Homotrimer.</text>
</comment>
<comment type="similarity">
    <text evidence="1">Belongs to the transferase hexapeptide repeat family. LpxD subfamily.</text>
</comment>
<proteinExistence type="inferred from homology"/>
<accession>Q7WA50</accession>
<feature type="chain" id="PRO_0000059649" description="UDP-3-O-acylglucosamine N-acyltransferase">
    <location>
        <begin position="1"/>
        <end position="363"/>
    </location>
</feature>
<feature type="active site" description="Proton acceptor" evidence="1">
    <location>
        <position position="266"/>
    </location>
</feature>
<protein>
    <recommendedName>
        <fullName evidence="1">UDP-3-O-acylglucosamine N-acyltransferase</fullName>
        <ecNumber evidence="1">2.3.1.191</ecNumber>
    </recommendedName>
</protein>
<dbReference type="EC" id="2.3.1.191" evidence="1"/>
<dbReference type="EMBL" id="BX640427">
    <property type="protein sequence ID" value="CAE36839.1"/>
    <property type="molecule type" value="Genomic_DNA"/>
</dbReference>
<dbReference type="RefSeq" id="WP_003811779.1">
    <property type="nucleotide sequence ID" value="NC_002928.3"/>
</dbReference>
<dbReference type="SMR" id="Q7WA50"/>
<dbReference type="GeneID" id="93203296"/>
<dbReference type="KEGG" id="bpa:BPP1537"/>
<dbReference type="HOGENOM" id="CLU_049865_0_1_4"/>
<dbReference type="UniPathway" id="UPA00973"/>
<dbReference type="Proteomes" id="UP000001421">
    <property type="component" value="Chromosome"/>
</dbReference>
<dbReference type="GO" id="GO:0016020">
    <property type="term" value="C:membrane"/>
    <property type="evidence" value="ECO:0007669"/>
    <property type="project" value="GOC"/>
</dbReference>
<dbReference type="GO" id="GO:0016410">
    <property type="term" value="F:N-acyltransferase activity"/>
    <property type="evidence" value="ECO:0007669"/>
    <property type="project" value="InterPro"/>
</dbReference>
<dbReference type="GO" id="GO:0009245">
    <property type="term" value="P:lipid A biosynthetic process"/>
    <property type="evidence" value="ECO:0007669"/>
    <property type="project" value="UniProtKB-UniRule"/>
</dbReference>
<dbReference type="CDD" id="cd03352">
    <property type="entry name" value="LbH_LpxD"/>
    <property type="match status" value="1"/>
</dbReference>
<dbReference type="Gene3D" id="2.160.10.10">
    <property type="entry name" value="Hexapeptide repeat proteins"/>
    <property type="match status" value="1"/>
</dbReference>
<dbReference type="Gene3D" id="3.40.1390.10">
    <property type="entry name" value="MurE/MurF, N-terminal domain"/>
    <property type="match status" value="1"/>
</dbReference>
<dbReference type="HAMAP" id="MF_00523">
    <property type="entry name" value="LpxD"/>
    <property type="match status" value="1"/>
</dbReference>
<dbReference type="InterPro" id="IPR001451">
    <property type="entry name" value="Hexapep"/>
</dbReference>
<dbReference type="InterPro" id="IPR018357">
    <property type="entry name" value="Hexapep_transf_CS"/>
</dbReference>
<dbReference type="InterPro" id="IPR007691">
    <property type="entry name" value="LpxD"/>
</dbReference>
<dbReference type="InterPro" id="IPR011004">
    <property type="entry name" value="Trimer_LpxA-like_sf"/>
</dbReference>
<dbReference type="InterPro" id="IPR020573">
    <property type="entry name" value="UDP_GlcNAc_AcTrfase_non-rep"/>
</dbReference>
<dbReference type="NCBIfam" id="TIGR01853">
    <property type="entry name" value="lipid_A_lpxD"/>
    <property type="match status" value="1"/>
</dbReference>
<dbReference type="NCBIfam" id="NF002060">
    <property type="entry name" value="PRK00892.1"/>
    <property type="match status" value="1"/>
</dbReference>
<dbReference type="PANTHER" id="PTHR43378">
    <property type="entry name" value="UDP-3-O-ACYLGLUCOSAMINE N-ACYLTRANSFERASE"/>
    <property type="match status" value="1"/>
</dbReference>
<dbReference type="PANTHER" id="PTHR43378:SF2">
    <property type="entry name" value="UDP-3-O-ACYLGLUCOSAMINE N-ACYLTRANSFERASE 1, MITOCHONDRIAL-RELATED"/>
    <property type="match status" value="1"/>
</dbReference>
<dbReference type="Pfam" id="PF00132">
    <property type="entry name" value="Hexapep"/>
    <property type="match status" value="2"/>
</dbReference>
<dbReference type="Pfam" id="PF14602">
    <property type="entry name" value="Hexapep_2"/>
    <property type="match status" value="1"/>
</dbReference>
<dbReference type="Pfam" id="PF04613">
    <property type="entry name" value="LpxD"/>
    <property type="match status" value="1"/>
</dbReference>
<dbReference type="SUPFAM" id="SSF51161">
    <property type="entry name" value="Trimeric LpxA-like enzymes"/>
    <property type="match status" value="1"/>
</dbReference>
<dbReference type="PROSITE" id="PS00101">
    <property type="entry name" value="HEXAPEP_TRANSFERASES"/>
    <property type="match status" value="2"/>
</dbReference>
<reference key="1">
    <citation type="journal article" date="2003" name="Nat. Genet.">
        <title>Comparative analysis of the genome sequences of Bordetella pertussis, Bordetella parapertussis and Bordetella bronchiseptica.</title>
        <authorList>
            <person name="Parkhill J."/>
            <person name="Sebaihia M."/>
            <person name="Preston A."/>
            <person name="Murphy L.D."/>
            <person name="Thomson N.R."/>
            <person name="Harris D.E."/>
            <person name="Holden M.T.G."/>
            <person name="Churcher C.M."/>
            <person name="Bentley S.D."/>
            <person name="Mungall K.L."/>
            <person name="Cerdeno-Tarraga A.-M."/>
            <person name="Temple L."/>
            <person name="James K.D."/>
            <person name="Harris B."/>
            <person name="Quail M.A."/>
            <person name="Achtman M."/>
            <person name="Atkin R."/>
            <person name="Baker S."/>
            <person name="Basham D."/>
            <person name="Bason N."/>
            <person name="Cherevach I."/>
            <person name="Chillingworth T."/>
            <person name="Collins M."/>
            <person name="Cronin A."/>
            <person name="Davis P."/>
            <person name="Doggett J."/>
            <person name="Feltwell T."/>
            <person name="Goble A."/>
            <person name="Hamlin N."/>
            <person name="Hauser H."/>
            <person name="Holroyd S."/>
            <person name="Jagels K."/>
            <person name="Leather S."/>
            <person name="Moule S."/>
            <person name="Norberczak H."/>
            <person name="O'Neil S."/>
            <person name="Ormond D."/>
            <person name="Price C."/>
            <person name="Rabbinowitsch E."/>
            <person name="Rutter S."/>
            <person name="Sanders M."/>
            <person name="Saunders D."/>
            <person name="Seeger K."/>
            <person name="Sharp S."/>
            <person name="Simmonds M."/>
            <person name="Skelton J."/>
            <person name="Squares R."/>
            <person name="Squares S."/>
            <person name="Stevens K."/>
            <person name="Unwin L."/>
            <person name="Whitehead S."/>
            <person name="Barrell B.G."/>
            <person name="Maskell D.J."/>
        </authorList>
    </citation>
    <scope>NUCLEOTIDE SEQUENCE [LARGE SCALE GENOMIC DNA]</scope>
    <source>
        <strain>12822 / ATCC BAA-587 / NCTC 13253</strain>
    </source>
</reference>
<keyword id="KW-0012">Acyltransferase</keyword>
<keyword id="KW-0441">Lipid A biosynthesis</keyword>
<keyword id="KW-0444">Lipid biosynthesis</keyword>
<keyword id="KW-0443">Lipid metabolism</keyword>
<keyword id="KW-0677">Repeat</keyword>
<keyword id="KW-0808">Transferase</keyword>
<name>LPXD_BORPA</name>
<gene>
    <name evidence="1" type="primary">lpxD</name>
    <name type="ordered locus">BPP1537</name>
</gene>
<sequence length="363" mass="37556">MPVLLDPENALALDVLLAGTDAQGLDWHLSAPDAADLPRIRGIGTLSSAGNEEISFLSNPRYQNQLATTRAAAVIVTPDVAQARQEQGASGHVLVVCKHPYLLYARLAQWFERASRPAGPAGVHPSAVVDPSAEIDADARVGAQCVIEAGARIGRGARLGPGCVIGAGSTVGADSLLHPRVTLYAGVHVGERAIIHSGAVLGADGFGFAPDPTLGRGAWGKIPQLGGVRVGNDVEIGANTTIDRGALDDTIVGDGVKLDNQIMVAHNVRIGAHTAIAACVGIAGSTTIGERCTIGGASMLSGHLAIADDVNISGGTAVTSNIAKAGRYTGVYPYAEHSEWQRNAAVIQQLALLRRRLRALERE</sequence>